<evidence type="ECO:0000255" key="1">
    <source>
        <dbReference type="HAMAP-Rule" id="MF_01903"/>
    </source>
</evidence>
<keyword id="KW-0997">Cell inner membrane</keyword>
<keyword id="KW-1003">Cell membrane</keyword>
<keyword id="KW-0328">Glycosyltransferase</keyword>
<keyword id="KW-0460">Magnesium</keyword>
<keyword id="KW-0472">Membrane</keyword>
<keyword id="KW-0479">Metal-binding</keyword>
<keyword id="KW-0660">Purine salvage</keyword>
<keyword id="KW-0808">Transferase</keyword>
<protein>
    <recommendedName>
        <fullName evidence="1">Xanthine-guanine phosphoribosyltransferase 2</fullName>
        <shortName evidence="1">XGPRT 2</shortName>
        <ecNumber evidence="1">2.4.2.-</ecNumber>
        <ecNumber evidence="1">2.4.2.22</ecNumber>
    </recommendedName>
    <alternativeName>
        <fullName evidence="1">Xanthine phosphoribosyltransferase 2</fullName>
    </alternativeName>
</protein>
<organism>
    <name type="scientific">Haemophilus influenzae (strain 86-028NP)</name>
    <dbReference type="NCBI Taxonomy" id="281310"/>
    <lineage>
        <taxon>Bacteria</taxon>
        <taxon>Pseudomonadati</taxon>
        <taxon>Pseudomonadota</taxon>
        <taxon>Gammaproteobacteria</taxon>
        <taxon>Pasteurellales</taxon>
        <taxon>Pasteurellaceae</taxon>
        <taxon>Haemophilus</taxon>
    </lineage>
</organism>
<accession>Q4QMM6</accession>
<proteinExistence type="inferred from homology"/>
<sequence>MSEKYVVTWDMFQMHARKLSERLLPASQWKGIIAVSRGGLFPAAVLARELGLRHIETVCIASYHDHNNQGELQVLHAAQVPNGGEGFIVVDDLVDTGNTARAIRQMYPNAKFVTVFAKPAGAELVDDYVIDIPQNTWIEQPWDLGLTFVPPLSRK</sequence>
<dbReference type="EC" id="2.4.2.-" evidence="1"/>
<dbReference type="EC" id="2.4.2.22" evidence="1"/>
<dbReference type="EMBL" id="CP000057">
    <property type="protein sequence ID" value="AAX87721.1"/>
    <property type="molecule type" value="Genomic_DNA"/>
</dbReference>
<dbReference type="SMR" id="Q4QMM6"/>
<dbReference type="KEGG" id="hit:NTHI0814"/>
<dbReference type="HOGENOM" id="CLU_080904_3_0_6"/>
<dbReference type="UniPathway" id="UPA00602">
    <property type="reaction ID" value="UER00658"/>
</dbReference>
<dbReference type="UniPathway" id="UPA00909">
    <property type="reaction ID" value="UER00887"/>
</dbReference>
<dbReference type="Proteomes" id="UP000002525">
    <property type="component" value="Chromosome"/>
</dbReference>
<dbReference type="GO" id="GO:0005829">
    <property type="term" value="C:cytosol"/>
    <property type="evidence" value="ECO:0007669"/>
    <property type="project" value="TreeGrafter"/>
</dbReference>
<dbReference type="GO" id="GO:0005886">
    <property type="term" value="C:plasma membrane"/>
    <property type="evidence" value="ECO:0007669"/>
    <property type="project" value="UniProtKB-SubCell"/>
</dbReference>
<dbReference type="GO" id="GO:0052657">
    <property type="term" value="F:guanine phosphoribosyltransferase activity"/>
    <property type="evidence" value="ECO:0007669"/>
    <property type="project" value="RHEA"/>
</dbReference>
<dbReference type="GO" id="GO:0004422">
    <property type="term" value="F:hypoxanthine phosphoribosyltransferase activity"/>
    <property type="evidence" value="ECO:0007669"/>
    <property type="project" value="RHEA"/>
</dbReference>
<dbReference type="GO" id="GO:0000287">
    <property type="term" value="F:magnesium ion binding"/>
    <property type="evidence" value="ECO:0007669"/>
    <property type="project" value="UniProtKB-UniRule"/>
</dbReference>
<dbReference type="GO" id="GO:0000310">
    <property type="term" value="F:xanthine phosphoribosyltransferase activity"/>
    <property type="evidence" value="ECO:0007669"/>
    <property type="project" value="UniProtKB-UniRule"/>
</dbReference>
<dbReference type="GO" id="GO:0032263">
    <property type="term" value="P:GMP salvage"/>
    <property type="evidence" value="ECO:0007669"/>
    <property type="project" value="UniProtKB-UniRule"/>
</dbReference>
<dbReference type="GO" id="GO:0032264">
    <property type="term" value="P:IMP salvage"/>
    <property type="evidence" value="ECO:0007669"/>
    <property type="project" value="TreeGrafter"/>
</dbReference>
<dbReference type="GO" id="GO:0006166">
    <property type="term" value="P:purine ribonucleoside salvage"/>
    <property type="evidence" value="ECO:0007669"/>
    <property type="project" value="UniProtKB-KW"/>
</dbReference>
<dbReference type="GO" id="GO:0032265">
    <property type="term" value="P:XMP salvage"/>
    <property type="evidence" value="ECO:0007669"/>
    <property type="project" value="UniProtKB-UniRule"/>
</dbReference>
<dbReference type="CDD" id="cd06223">
    <property type="entry name" value="PRTases_typeI"/>
    <property type="match status" value="1"/>
</dbReference>
<dbReference type="FunFam" id="3.40.50.2020:FF:000009">
    <property type="entry name" value="Xanthine phosphoribosyltransferase"/>
    <property type="match status" value="1"/>
</dbReference>
<dbReference type="Gene3D" id="3.40.50.2020">
    <property type="match status" value="1"/>
</dbReference>
<dbReference type="HAMAP" id="MF_01903">
    <property type="entry name" value="XGPRT"/>
    <property type="match status" value="1"/>
</dbReference>
<dbReference type="InterPro" id="IPR000836">
    <property type="entry name" value="PRibTrfase_dom"/>
</dbReference>
<dbReference type="InterPro" id="IPR029057">
    <property type="entry name" value="PRTase-like"/>
</dbReference>
<dbReference type="InterPro" id="IPR023747">
    <property type="entry name" value="Xanthine_Guanine_PRibTrfase"/>
</dbReference>
<dbReference type="NCBIfam" id="NF006613">
    <property type="entry name" value="PRK09177.1"/>
    <property type="match status" value="1"/>
</dbReference>
<dbReference type="PANTHER" id="PTHR39563">
    <property type="entry name" value="XANTHINE PHOSPHORIBOSYLTRANSFERASE"/>
    <property type="match status" value="1"/>
</dbReference>
<dbReference type="PANTHER" id="PTHR39563:SF1">
    <property type="entry name" value="XANTHINE-GUANINE PHOSPHORIBOSYLTRANSFERASE"/>
    <property type="match status" value="1"/>
</dbReference>
<dbReference type="Pfam" id="PF00156">
    <property type="entry name" value="Pribosyltran"/>
    <property type="match status" value="1"/>
</dbReference>
<dbReference type="SUPFAM" id="SSF53271">
    <property type="entry name" value="PRTase-like"/>
    <property type="match status" value="1"/>
</dbReference>
<dbReference type="PROSITE" id="PS00103">
    <property type="entry name" value="PUR_PYR_PR_TRANSFER"/>
    <property type="match status" value="1"/>
</dbReference>
<gene>
    <name evidence="1" type="primary">gpt2</name>
    <name type="ordered locus">NTHI0814</name>
</gene>
<name>XGPT2_HAEI8</name>
<reference key="1">
    <citation type="journal article" date="2005" name="J. Bacteriol.">
        <title>Genomic sequence of an otitis media isolate of nontypeable Haemophilus influenzae: comparative study with H. influenzae serotype d, strain KW20.</title>
        <authorList>
            <person name="Harrison A."/>
            <person name="Dyer D.W."/>
            <person name="Gillaspy A."/>
            <person name="Ray W.C."/>
            <person name="Mungur R."/>
            <person name="Carson M.B."/>
            <person name="Zhong H."/>
            <person name="Gipson J."/>
            <person name="Gipson M."/>
            <person name="Johnson L.S."/>
            <person name="Lewis L."/>
            <person name="Bakaletz L.O."/>
            <person name="Munson R.S. Jr."/>
        </authorList>
    </citation>
    <scope>NUCLEOTIDE SEQUENCE [LARGE SCALE GENOMIC DNA]</scope>
    <source>
        <strain>86-028NP</strain>
    </source>
</reference>
<feature type="chain" id="PRO_0000139673" description="Xanthine-guanine phosphoribosyltransferase 2">
    <location>
        <begin position="1"/>
        <end position="155"/>
    </location>
</feature>
<feature type="binding site" evidence="1">
    <location>
        <begin position="37"/>
        <end position="38"/>
    </location>
    <ligand>
        <name>5-phospho-alpha-D-ribose 1-diphosphate</name>
        <dbReference type="ChEBI" id="CHEBI:58017"/>
    </ligand>
</feature>
<feature type="binding site" evidence="1">
    <location>
        <begin position="91"/>
        <end position="99"/>
    </location>
    <ligand>
        <name>5-phospho-alpha-D-ribose 1-diphosphate</name>
        <dbReference type="ChEBI" id="CHEBI:58017"/>
    </ligand>
</feature>
<feature type="binding site" evidence="1">
    <location>
        <position position="92"/>
    </location>
    <ligand>
        <name>Mg(2+)</name>
        <dbReference type="ChEBI" id="CHEBI:18420"/>
    </ligand>
</feature>
<feature type="binding site" evidence="1">
    <location>
        <begin position="95"/>
        <end position="99"/>
    </location>
    <ligand>
        <name>GMP</name>
        <dbReference type="ChEBI" id="CHEBI:58115"/>
    </ligand>
</feature>
<feature type="binding site" evidence="1">
    <location>
        <position position="95"/>
    </location>
    <ligand>
        <name>guanine</name>
        <dbReference type="ChEBI" id="CHEBI:16235"/>
    </ligand>
</feature>
<feature type="binding site" evidence="1">
    <location>
        <position position="95"/>
    </location>
    <ligand>
        <name>xanthine</name>
        <dbReference type="ChEBI" id="CHEBI:17712"/>
    </ligand>
</feature>
<feature type="binding site" evidence="1">
    <location>
        <begin position="137"/>
        <end position="138"/>
    </location>
    <ligand>
        <name>GMP</name>
        <dbReference type="ChEBI" id="CHEBI:58115"/>
    </ligand>
</feature>
<feature type="binding site" evidence="1">
    <location>
        <position position="138"/>
    </location>
    <ligand>
        <name>guanine</name>
        <dbReference type="ChEBI" id="CHEBI:16235"/>
    </ligand>
</feature>
<feature type="binding site" evidence="1">
    <location>
        <position position="138"/>
    </location>
    <ligand>
        <name>xanthine</name>
        <dbReference type="ChEBI" id="CHEBI:17712"/>
    </ligand>
</feature>
<comment type="function">
    <text evidence="1">Purine salvage pathway enzyme that catalyzes the transfer of the ribosyl-5-phosphate group from 5-phospho-alpha-D-ribose 1-diphosphate (PRPP) to the N9 position of the 6-oxopurines guanine and xanthine to form the corresponding ribonucleotides GMP (guanosine 5'-monophosphate) and XMP (xanthosine 5'-monophosphate), with the release of PPi. To a lesser extent, also acts on hypoxanthine.</text>
</comment>
<comment type="catalytic activity">
    <reaction evidence="1">
        <text>GMP + diphosphate = guanine + 5-phospho-alpha-D-ribose 1-diphosphate</text>
        <dbReference type="Rhea" id="RHEA:25424"/>
        <dbReference type="ChEBI" id="CHEBI:16235"/>
        <dbReference type="ChEBI" id="CHEBI:33019"/>
        <dbReference type="ChEBI" id="CHEBI:58017"/>
        <dbReference type="ChEBI" id="CHEBI:58115"/>
    </reaction>
    <physiologicalReaction direction="right-to-left" evidence="1">
        <dbReference type="Rhea" id="RHEA:25426"/>
    </physiologicalReaction>
</comment>
<comment type="catalytic activity">
    <reaction evidence="1">
        <text>XMP + diphosphate = xanthine + 5-phospho-alpha-D-ribose 1-diphosphate</text>
        <dbReference type="Rhea" id="RHEA:10800"/>
        <dbReference type="ChEBI" id="CHEBI:17712"/>
        <dbReference type="ChEBI" id="CHEBI:33019"/>
        <dbReference type="ChEBI" id="CHEBI:57464"/>
        <dbReference type="ChEBI" id="CHEBI:58017"/>
        <dbReference type="EC" id="2.4.2.22"/>
    </reaction>
    <physiologicalReaction direction="right-to-left" evidence="1">
        <dbReference type="Rhea" id="RHEA:10802"/>
    </physiologicalReaction>
</comment>
<comment type="catalytic activity">
    <reaction evidence="1">
        <text>IMP + diphosphate = hypoxanthine + 5-phospho-alpha-D-ribose 1-diphosphate</text>
        <dbReference type="Rhea" id="RHEA:17973"/>
        <dbReference type="ChEBI" id="CHEBI:17368"/>
        <dbReference type="ChEBI" id="CHEBI:33019"/>
        <dbReference type="ChEBI" id="CHEBI:58017"/>
        <dbReference type="ChEBI" id="CHEBI:58053"/>
    </reaction>
    <physiologicalReaction direction="right-to-left" evidence="1">
        <dbReference type="Rhea" id="RHEA:17975"/>
    </physiologicalReaction>
</comment>
<comment type="cofactor">
    <cofactor evidence="1">
        <name>Mg(2+)</name>
        <dbReference type="ChEBI" id="CHEBI:18420"/>
    </cofactor>
</comment>
<comment type="pathway">
    <text evidence="1">Purine metabolism; GMP biosynthesis via salvage pathway; GMP from guanine: step 1/1.</text>
</comment>
<comment type="pathway">
    <text evidence="1">Purine metabolism; XMP biosynthesis via salvage pathway; XMP from xanthine: step 1/1.</text>
</comment>
<comment type="subunit">
    <text evidence="1">Homotetramer.</text>
</comment>
<comment type="subcellular location">
    <subcellularLocation>
        <location evidence="1">Cell inner membrane</location>
        <topology evidence="1">Peripheral membrane protein</topology>
    </subcellularLocation>
</comment>
<comment type="similarity">
    <text evidence="1">Belongs to the purine/pyrimidine phosphoribosyltransferase family. XGPT subfamily.</text>
</comment>